<keyword id="KW-0067">ATP-binding</keyword>
<keyword id="KW-0436">Ligase</keyword>
<keyword id="KW-0547">Nucleotide-binding</keyword>
<keyword id="KW-0658">Purine biosynthesis</keyword>
<dbReference type="EC" id="6.3.2.6" evidence="1"/>
<dbReference type="EMBL" id="CP000359">
    <property type="protein sequence ID" value="ABF44370.1"/>
    <property type="molecule type" value="Genomic_DNA"/>
</dbReference>
<dbReference type="RefSeq" id="WP_011529217.1">
    <property type="nucleotide sequence ID" value="NC_008025.1"/>
</dbReference>
<dbReference type="SMR" id="Q1J2B4"/>
<dbReference type="STRING" id="319795.Dgeo_0067"/>
<dbReference type="KEGG" id="dge:Dgeo_0067"/>
<dbReference type="eggNOG" id="COG0152">
    <property type="taxonomic scope" value="Bacteria"/>
</dbReference>
<dbReference type="HOGENOM" id="CLU_061495_2_0_0"/>
<dbReference type="UniPathway" id="UPA00074">
    <property type="reaction ID" value="UER00131"/>
</dbReference>
<dbReference type="Proteomes" id="UP000002431">
    <property type="component" value="Chromosome"/>
</dbReference>
<dbReference type="GO" id="GO:0005524">
    <property type="term" value="F:ATP binding"/>
    <property type="evidence" value="ECO:0007669"/>
    <property type="project" value="UniProtKB-KW"/>
</dbReference>
<dbReference type="GO" id="GO:0004639">
    <property type="term" value="F:phosphoribosylaminoimidazolesuccinocarboxamide synthase activity"/>
    <property type="evidence" value="ECO:0007669"/>
    <property type="project" value="UniProtKB-UniRule"/>
</dbReference>
<dbReference type="GO" id="GO:0006189">
    <property type="term" value="P:'de novo' IMP biosynthetic process"/>
    <property type="evidence" value="ECO:0007669"/>
    <property type="project" value="UniProtKB-UniRule"/>
</dbReference>
<dbReference type="GO" id="GO:0009236">
    <property type="term" value="P:cobalamin biosynthetic process"/>
    <property type="evidence" value="ECO:0007669"/>
    <property type="project" value="InterPro"/>
</dbReference>
<dbReference type="CDD" id="cd01415">
    <property type="entry name" value="SAICAR_synt_PurC"/>
    <property type="match status" value="1"/>
</dbReference>
<dbReference type="FunFam" id="3.30.470.20:FF:000006">
    <property type="entry name" value="Phosphoribosylaminoimidazole-succinocarboxamide synthase"/>
    <property type="match status" value="1"/>
</dbReference>
<dbReference type="Gene3D" id="3.30.470.20">
    <property type="entry name" value="ATP-grasp fold, B domain"/>
    <property type="match status" value="1"/>
</dbReference>
<dbReference type="Gene3D" id="3.30.200.20">
    <property type="entry name" value="Phosphorylase Kinase, domain 1"/>
    <property type="match status" value="1"/>
</dbReference>
<dbReference type="HAMAP" id="MF_00137">
    <property type="entry name" value="SAICAR_synth"/>
    <property type="match status" value="1"/>
</dbReference>
<dbReference type="InterPro" id="IPR028923">
    <property type="entry name" value="SAICAR_synt/ADE2_N"/>
</dbReference>
<dbReference type="InterPro" id="IPR033934">
    <property type="entry name" value="SAICAR_synt_PurC"/>
</dbReference>
<dbReference type="InterPro" id="IPR001636">
    <property type="entry name" value="SAICAR_synth"/>
</dbReference>
<dbReference type="InterPro" id="IPR050089">
    <property type="entry name" value="SAICAR_synthetase"/>
</dbReference>
<dbReference type="InterPro" id="IPR018236">
    <property type="entry name" value="SAICAR_synthetase_CS"/>
</dbReference>
<dbReference type="NCBIfam" id="TIGR00081">
    <property type="entry name" value="purC"/>
    <property type="match status" value="1"/>
</dbReference>
<dbReference type="PANTHER" id="PTHR43599">
    <property type="entry name" value="MULTIFUNCTIONAL PROTEIN ADE2"/>
    <property type="match status" value="1"/>
</dbReference>
<dbReference type="PANTHER" id="PTHR43599:SF3">
    <property type="entry name" value="SI:DKEY-6E2.2"/>
    <property type="match status" value="1"/>
</dbReference>
<dbReference type="Pfam" id="PF01259">
    <property type="entry name" value="SAICAR_synt"/>
    <property type="match status" value="1"/>
</dbReference>
<dbReference type="SUPFAM" id="SSF56104">
    <property type="entry name" value="SAICAR synthase-like"/>
    <property type="match status" value="1"/>
</dbReference>
<dbReference type="PROSITE" id="PS01057">
    <property type="entry name" value="SAICAR_SYNTHETASE_1"/>
    <property type="match status" value="1"/>
</dbReference>
<dbReference type="PROSITE" id="PS01058">
    <property type="entry name" value="SAICAR_SYNTHETASE_2"/>
    <property type="match status" value="1"/>
</dbReference>
<feature type="chain" id="PRO_1000057883" description="Phosphoribosylaminoimidazole-succinocarboxamide synthase">
    <location>
        <begin position="1"/>
        <end position="241"/>
    </location>
</feature>
<protein>
    <recommendedName>
        <fullName evidence="1">Phosphoribosylaminoimidazole-succinocarboxamide synthase</fullName>
        <ecNumber evidence="1">6.3.2.6</ecNumber>
    </recommendedName>
    <alternativeName>
        <fullName evidence="1">SAICAR synthetase</fullName>
    </alternativeName>
</protein>
<reference key="1">
    <citation type="submission" date="2006-04" db="EMBL/GenBank/DDBJ databases">
        <title>Complete sequence of chromosome of Deinococcus geothermalis DSM 11300.</title>
        <authorList>
            <person name="Copeland A."/>
            <person name="Lucas S."/>
            <person name="Lapidus A."/>
            <person name="Barry K."/>
            <person name="Detter J.C."/>
            <person name="Glavina del Rio T."/>
            <person name="Hammon N."/>
            <person name="Israni S."/>
            <person name="Dalin E."/>
            <person name="Tice H."/>
            <person name="Pitluck S."/>
            <person name="Brettin T."/>
            <person name="Bruce D."/>
            <person name="Han C."/>
            <person name="Tapia R."/>
            <person name="Saunders E."/>
            <person name="Gilna P."/>
            <person name="Schmutz J."/>
            <person name="Larimer F."/>
            <person name="Land M."/>
            <person name="Hauser L."/>
            <person name="Kyrpides N."/>
            <person name="Kim E."/>
            <person name="Daly M.J."/>
            <person name="Fredrickson J.K."/>
            <person name="Makarova K.S."/>
            <person name="Gaidamakova E.K."/>
            <person name="Zhai M."/>
            <person name="Richardson P."/>
        </authorList>
    </citation>
    <scope>NUCLEOTIDE SEQUENCE [LARGE SCALE GENOMIC DNA]</scope>
    <source>
        <strain>DSM 11300 / CIP 105573 / AG-3a</strain>
    </source>
</reference>
<organism>
    <name type="scientific">Deinococcus geothermalis (strain DSM 11300 / CIP 105573 / AG-3a)</name>
    <dbReference type="NCBI Taxonomy" id="319795"/>
    <lineage>
        <taxon>Bacteria</taxon>
        <taxon>Thermotogati</taxon>
        <taxon>Deinococcota</taxon>
        <taxon>Deinococci</taxon>
        <taxon>Deinococcales</taxon>
        <taxon>Deinococcaceae</taxon>
        <taxon>Deinococcus</taxon>
    </lineage>
</organism>
<accession>Q1J2B4</accession>
<proteinExistence type="inferred from homology"/>
<evidence type="ECO:0000255" key="1">
    <source>
        <dbReference type="HAMAP-Rule" id="MF_00137"/>
    </source>
</evidence>
<gene>
    <name evidence="1" type="primary">purC</name>
    <name type="ordered locus">Dgeo_0067</name>
</gene>
<comment type="catalytic activity">
    <reaction evidence="1">
        <text>5-amino-1-(5-phospho-D-ribosyl)imidazole-4-carboxylate + L-aspartate + ATP = (2S)-2-[5-amino-1-(5-phospho-beta-D-ribosyl)imidazole-4-carboxamido]succinate + ADP + phosphate + 2 H(+)</text>
        <dbReference type="Rhea" id="RHEA:22628"/>
        <dbReference type="ChEBI" id="CHEBI:15378"/>
        <dbReference type="ChEBI" id="CHEBI:29991"/>
        <dbReference type="ChEBI" id="CHEBI:30616"/>
        <dbReference type="ChEBI" id="CHEBI:43474"/>
        <dbReference type="ChEBI" id="CHEBI:58443"/>
        <dbReference type="ChEBI" id="CHEBI:77657"/>
        <dbReference type="ChEBI" id="CHEBI:456216"/>
        <dbReference type="EC" id="6.3.2.6"/>
    </reaction>
</comment>
<comment type="pathway">
    <text evidence="1">Purine metabolism; IMP biosynthesis via de novo pathway; 5-amino-1-(5-phospho-D-ribosyl)imidazole-4-carboxamide from 5-amino-1-(5-phospho-D-ribosyl)imidazole-4-carboxylate: step 1/2.</text>
</comment>
<comment type="similarity">
    <text evidence="1">Belongs to the SAICAR synthetase family.</text>
</comment>
<sequence length="241" mass="27010">MKLEQRYEGKAKKVYATENPLEYVVEYKDDATAFNGVKRAQIVGKGQINNAITAHLFPLLEEAGVPTHFLEKLSEREQRVRAVTIIPVEVIVRNVAAGSFAKRLGLEEGTPLARPVVEYCLKSDALGDPLINTDTAVALGWASEDDLKRIRELALKVRDFLTPYFAARGIRLIDFKLEFGRTHDGQIVLADEISPDTCRFWDAATNEKLDKDRFRRDLGGVEDAYAEMLRRVTGEGGRDEG</sequence>
<name>PUR7_DEIGD</name>